<gene>
    <name evidence="1" type="primary">rsmA</name>
    <name evidence="1" type="synonym">ksgA</name>
    <name type="ordered locus">BTH_I0578</name>
</gene>
<sequence length="275" mass="30345">MSNSRQHQGHFARKRFGQNFLVDHGVIDAIVAAIRPERGERMVEIGPGLGALTGPVIARLATPDSPLHAVELDRDLIGRLKQRFGELLELHEGDALAFDFGSLALPGEKPSLRIIGNLPYNISSPLLFHLMSFAPVVIDQHFMLQNEVVERMVAEPGTKAFSRLSVMLQYRYVMDKLIDVPPESFQPPPKVDSAIVRMIPHAPHELPAVDPAVLGEVVTAAFSQRRKMLRNTLGGYRDLVDFDALGFDLARRAEDVGVDEYVRVAQAACAARAGR</sequence>
<reference key="1">
    <citation type="journal article" date="2005" name="BMC Genomics">
        <title>Bacterial genome adaptation to niches: divergence of the potential virulence genes in three Burkholderia species of different survival strategies.</title>
        <authorList>
            <person name="Kim H.S."/>
            <person name="Schell M.A."/>
            <person name="Yu Y."/>
            <person name="Ulrich R.L."/>
            <person name="Sarria S.H."/>
            <person name="Nierman W.C."/>
            <person name="DeShazer D."/>
        </authorList>
    </citation>
    <scope>NUCLEOTIDE SEQUENCE [LARGE SCALE GENOMIC DNA]</scope>
    <source>
        <strain>ATCC 700388 / DSM 13276 / CCUG 48851 / CIP 106301 / E264</strain>
    </source>
</reference>
<comment type="function">
    <text evidence="1">Specifically dimethylates two adjacent adenosines (A1518 and A1519) in the loop of a conserved hairpin near the 3'-end of 16S rRNA in the 30S particle. May play a critical role in biogenesis of 30S subunits.</text>
</comment>
<comment type="catalytic activity">
    <reaction evidence="1">
        <text>adenosine(1518)/adenosine(1519) in 16S rRNA + 4 S-adenosyl-L-methionine = N(6)-dimethyladenosine(1518)/N(6)-dimethyladenosine(1519) in 16S rRNA + 4 S-adenosyl-L-homocysteine + 4 H(+)</text>
        <dbReference type="Rhea" id="RHEA:19609"/>
        <dbReference type="Rhea" id="RHEA-COMP:10232"/>
        <dbReference type="Rhea" id="RHEA-COMP:10233"/>
        <dbReference type="ChEBI" id="CHEBI:15378"/>
        <dbReference type="ChEBI" id="CHEBI:57856"/>
        <dbReference type="ChEBI" id="CHEBI:59789"/>
        <dbReference type="ChEBI" id="CHEBI:74411"/>
        <dbReference type="ChEBI" id="CHEBI:74493"/>
        <dbReference type="EC" id="2.1.1.182"/>
    </reaction>
</comment>
<comment type="subcellular location">
    <subcellularLocation>
        <location evidence="1">Cytoplasm</location>
    </subcellularLocation>
</comment>
<comment type="similarity">
    <text evidence="1">Belongs to the class I-like SAM-binding methyltransferase superfamily. rRNA adenine N(6)-methyltransferase family. RsmA subfamily.</text>
</comment>
<evidence type="ECO:0000255" key="1">
    <source>
        <dbReference type="HAMAP-Rule" id="MF_00607"/>
    </source>
</evidence>
<feature type="chain" id="PRO_0000257266" description="Ribosomal RNA small subunit methyltransferase A">
    <location>
        <begin position="1"/>
        <end position="275"/>
    </location>
</feature>
<feature type="binding site" evidence="1">
    <location>
        <position position="19"/>
    </location>
    <ligand>
        <name>S-adenosyl-L-methionine</name>
        <dbReference type="ChEBI" id="CHEBI:59789"/>
    </ligand>
</feature>
<feature type="binding site" evidence="1">
    <location>
        <position position="21"/>
    </location>
    <ligand>
        <name>S-adenosyl-L-methionine</name>
        <dbReference type="ChEBI" id="CHEBI:59789"/>
    </ligand>
</feature>
<feature type="binding site" evidence="1">
    <location>
        <position position="46"/>
    </location>
    <ligand>
        <name>S-adenosyl-L-methionine</name>
        <dbReference type="ChEBI" id="CHEBI:59789"/>
    </ligand>
</feature>
<feature type="binding site" evidence="1">
    <location>
        <position position="71"/>
    </location>
    <ligand>
        <name>S-adenosyl-L-methionine</name>
        <dbReference type="ChEBI" id="CHEBI:59789"/>
    </ligand>
</feature>
<feature type="binding site" evidence="1">
    <location>
        <position position="94"/>
    </location>
    <ligand>
        <name>S-adenosyl-L-methionine</name>
        <dbReference type="ChEBI" id="CHEBI:59789"/>
    </ligand>
</feature>
<feature type="binding site" evidence="1">
    <location>
        <position position="117"/>
    </location>
    <ligand>
        <name>S-adenosyl-L-methionine</name>
        <dbReference type="ChEBI" id="CHEBI:59789"/>
    </ligand>
</feature>
<dbReference type="EC" id="2.1.1.182" evidence="1"/>
<dbReference type="EMBL" id="CP000086">
    <property type="protein sequence ID" value="ABC37091.1"/>
    <property type="molecule type" value="Genomic_DNA"/>
</dbReference>
<dbReference type="RefSeq" id="WP_009892908.1">
    <property type="nucleotide sequence ID" value="NZ_CP008785.1"/>
</dbReference>
<dbReference type="SMR" id="Q2T114"/>
<dbReference type="GeneID" id="45120339"/>
<dbReference type="KEGG" id="bte:BTH_I0578"/>
<dbReference type="HOGENOM" id="CLU_041220_0_1_4"/>
<dbReference type="Proteomes" id="UP000001930">
    <property type="component" value="Chromosome I"/>
</dbReference>
<dbReference type="GO" id="GO:0005829">
    <property type="term" value="C:cytosol"/>
    <property type="evidence" value="ECO:0007669"/>
    <property type="project" value="TreeGrafter"/>
</dbReference>
<dbReference type="GO" id="GO:0052908">
    <property type="term" value="F:16S rRNA (adenine(1518)-N(6)/adenine(1519)-N(6))-dimethyltransferase activity"/>
    <property type="evidence" value="ECO:0007669"/>
    <property type="project" value="UniProtKB-EC"/>
</dbReference>
<dbReference type="GO" id="GO:0003723">
    <property type="term" value="F:RNA binding"/>
    <property type="evidence" value="ECO:0007669"/>
    <property type="project" value="UniProtKB-KW"/>
</dbReference>
<dbReference type="FunFam" id="1.10.8.100:FF:000001">
    <property type="entry name" value="Ribosomal RNA small subunit methyltransferase A"/>
    <property type="match status" value="1"/>
</dbReference>
<dbReference type="Gene3D" id="1.10.8.100">
    <property type="entry name" value="Ribosomal RNA adenine dimethylase-like, domain 2"/>
    <property type="match status" value="1"/>
</dbReference>
<dbReference type="Gene3D" id="3.40.50.150">
    <property type="entry name" value="Vaccinia Virus protein VP39"/>
    <property type="match status" value="1"/>
</dbReference>
<dbReference type="HAMAP" id="MF_00607">
    <property type="entry name" value="16SrRNA_methyltr_A"/>
    <property type="match status" value="1"/>
</dbReference>
<dbReference type="InterPro" id="IPR001737">
    <property type="entry name" value="KsgA/Erm"/>
</dbReference>
<dbReference type="InterPro" id="IPR023165">
    <property type="entry name" value="rRNA_Ade_diMease-like_C"/>
</dbReference>
<dbReference type="InterPro" id="IPR020598">
    <property type="entry name" value="rRNA_Ade_methylase_Trfase_N"/>
</dbReference>
<dbReference type="InterPro" id="IPR011530">
    <property type="entry name" value="rRNA_adenine_dimethylase"/>
</dbReference>
<dbReference type="InterPro" id="IPR029063">
    <property type="entry name" value="SAM-dependent_MTases_sf"/>
</dbReference>
<dbReference type="NCBIfam" id="TIGR00755">
    <property type="entry name" value="ksgA"/>
    <property type="match status" value="1"/>
</dbReference>
<dbReference type="PANTHER" id="PTHR11727">
    <property type="entry name" value="DIMETHYLADENOSINE TRANSFERASE"/>
    <property type="match status" value="1"/>
</dbReference>
<dbReference type="PANTHER" id="PTHR11727:SF7">
    <property type="entry name" value="DIMETHYLADENOSINE TRANSFERASE-RELATED"/>
    <property type="match status" value="1"/>
</dbReference>
<dbReference type="Pfam" id="PF00398">
    <property type="entry name" value="RrnaAD"/>
    <property type="match status" value="1"/>
</dbReference>
<dbReference type="SMART" id="SM00650">
    <property type="entry name" value="rADc"/>
    <property type="match status" value="1"/>
</dbReference>
<dbReference type="SUPFAM" id="SSF53335">
    <property type="entry name" value="S-adenosyl-L-methionine-dependent methyltransferases"/>
    <property type="match status" value="1"/>
</dbReference>
<dbReference type="PROSITE" id="PS51689">
    <property type="entry name" value="SAM_RNA_A_N6_MT"/>
    <property type="match status" value="1"/>
</dbReference>
<proteinExistence type="inferred from homology"/>
<accession>Q2T114</accession>
<name>RSMA_BURTA</name>
<protein>
    <recommendedName>
        <fullName evidence="1">Ribosomal RNA small subunit methyltransferase A</fullName>
        <ecNumber evidence="1">2.1.1.182</ecNumber>
    </recommendedName>
    <alternativeName>
        <fullName evidence="1">16S rRNA (adenine(1518)-N(6)/adenine(1519)-N(6))-dimethyltransferase</fullName>
    </alternativeName>
    <alternativeName>
        <fullName evidence="1">16S rRNA dimethyladenosine transferase</fullName>
    </alternativeName>
    <alternativeName>
        <fullName evidence="1">16S rRNA dimethylase</fullName>
    </alternativeName>
    <alternativeName>
        <fullName evidence="1">S-adenosylmethionine-6-N', N'-adenosyl(rRNA) dimethyltransferase</fullName>
    </alternativeName>
</protein>
<organism>
    <name type="scientific">Burkholderia thailandensis (strain ATCC 700388 / DSM 13276 / CCUG 48851 / CIP 106301 / E264)</name>
    <dbReference type="NCBI Taxonomy" id="271848"/>
    <lineage>
        <taxon>Bacteria</taxon>
        <taxon>Pseudomonadati</taxon>
        <taxon>Pseudomonadota</taxon>
        <taxon>Betaproteobacteria</taxon>
        <taxon>Burkholderiales</taxon>
        <taxon>Burkholderiaceae</taxon>
        <taxon>Burkholderia</taxon>
        <taxon>pseudomallei group</taxon>
    </lineage>
</organism>
<keyword id="KW-0963">Cytoplasm</keyword>
<keyword id="KW-0489">Methyltransferase</keyword>
<keyword id="KW-0694">RNA-binding</keyword>
<keyword id="KW-0698">rRNA processing</keyword>
<keyword id="KW-0949">S-adenosyl-L-methionine</keyword>
<keyword id="KW-0808">Transferase</keyword>